<sequence length="351" mass="37364">MSTVPARIEPVAPLAPQAQDLRCFNTLGLASHAPAFVALTEPSQLPALSALAPRFRQLVVLGGGSNVVLPASIDGLVAQVRLPGVRLVGQCADAWVVEAAAGENWHGFVTACVDNGWDGLENLALIPGTVGAAPVQNIGAYGVELADRFHSLTAWDVKGGRWVEMGAAECRFAYRDSFFKHQEPGAWVIGSVRFALPRPWQPVLDYPDLQRHAALDGAAPTARAVYDAVCAIRRAKLPDPAVVGNAGSFFKNPLVDAGTRQALLGRFPGLVSYPQPDGRYKLAAGWLIDQCGWKGRQLGAAGVHDRQALVLVNRGGAQARDIMALAAAIQGDVERRYGVRLEPEPVVVPAR</sequence>
<evidence type="ECO:0000250" key="1"/>
<evidence type="ECO:0000305" key="2"/>
<proteinExistence type="inferred from homology"/>
<protein>
    <recommendedName>
        <fullName>UDP-N-acetylenolpyruvoylglucosamine reductase</fullName>
        <ecNumber>1.3.1.98</ecNumber>
    </recommendedName>
    <alternativeName>
        <fullName>UDP-N-acetylmuramate dehydrogenase</fullName>
    </alternativeName>
</protein>
<dbReference type="EC" id="1.3.1.98"/>
<dbReference type="EMBL" id="AJ238308">
    <property type="protein sequence ID" value="CAB41011.1"/>
    <property type="molecule type" value="Genomic_DNA"/>
</dbReference>
<dbReference type="EMBL" id="BX640418">
    <property type="protein sequence ID" value="CAE42782.1"/>
    <property type="molecule type" value="Genomic_DNA"/>
</dbReference>
<dbReference type="RefSeq" id="NP_881137.1">
    <property type="nucleotide sequence ID" value="NC_002929.2"/>
</dbReference>
<dbReference type="RefSeq" id="WP_010930965.1">
    <property type="nucleotide sequence ID" value="NZ_CP039022.1"/>
</dbReference>
<dbReference type="SMR" id="Q9X6Y8"/>
<dbReference type="STRING" id="257313.BP2510"/>
<dbReference type="PaxDb" id="257313-BP2510"/>
<dbReference type="GeneID" id="69602411"/>
<dbReference type="KEGG" id="bpe:BP2510"/>
<dbReference type="PATRIC" id="fig|257313.5.peg.2708"/>
<dbReference type="eggNOG" id="COG0812">
    <property type="taxonomic scope" value="Bacteria"/>
</dbReference>
<dbReference type="HOGENOM" id="CLU_035304_0_0_4"/>
<dbReference type="UniPathway" id="UPA00219"/>
<dbReference type="Proteomes" id="UP000002676">
    <property type="component" value="Chromosome"/>
</dbReference>
<dbReference type="GO" id="GO:0005829">
    <property type="term" value="C:cytosol"/>
    <property type="evidence" value="ECO:0007669"/>
    <property type="project" value="TreeGrafter"/>
</dbReference>
<dbReference type="GO" id="GO:0071949">
    <property type="term" value="F:FAD binding"/>
    <property type="evidence" value="ECO:0007669"/>
    <property type="project" value="InterPro"/>
</dbReference>
<dbReference type="GO" id="GO:0008762">
    <property type="term" value="F:UDP-N-acetylmuramate dehydrogenase activity"/>
    <property type="evidence" value="ECO:0007669"/>
    <property type="project" value="UniProtKB-UniRule"/>
</dbReference>
<dbReference type="GO" id="GO:0051301">
    <property type="term" value="P:cell division"/>
    <property type="evidence" value="ECO:0007669"/>
    <property type="project" value="UniProtKB-KW"/>
</dbReference>
<dbReference type="GO" id="GO:0071555">
    <property type="term" value="P:cell wall organization"/>
    <property type="evidence" value="ECO:0007669"/>
    <property type="project" value="UniProtKB-KW"/>
</dbReference>
<dbReference type="GO" id="GO:0009252">
    <property type="term" value="P:peptidoglycan biosynthetic process"/>
    <property type="evidence" value="ECO:0007669"/>
    <property type="project" value="UniProtKB-UniRule"/>
</dbReference>
<dbReference type="GO" id="GO:0008360">
    <property type="term" value="P:regulation of cell shape"/>
    <property type="evidence" value="ECO:0007669"/>
    <property type="project" value="UniProtKB-KW"/>
</dbReference>
<dbReference type="Gene3D" id="3.30.465.10">
    <property type="match status" value="1"/>
</dbReference>
<dbReference type="Gene3D" id="3.90.78.10">
    <property type="entry name" value="UDP-N-acetylenolpyruvoylglucosamine reductase, C-terminal domain"/>
    <property type="match status" value="1"/>
</dbReference>
<dbReference type="Gene3D" id="3.30.43.10">
    <property type="entry name" value="Uridine Diphospho-n-acetylenolpyruvylglucosamine Reductase, domain 2"/>
    <property type="match status" value="1"/>
</dbReference>
<dbReference type="HAMAP" id="MF_00037">
    <property type="entry name" value="MurB"/>
    <property type="match status" value="1"/>
</dbReference>
<dbReference type="InterPro" id="IPR016166">
    <property type="entry name" value="FAD-bd_PCMH"/>
</dbReference>
<dbReference type="InterPro" id="IPR036318">
    <property type="entry name" value="FAD-bd_PCMH-like_sf"/>
</dbReference>
<dbReference type="InterPro" id="IPR016167">
    <property type="entry name" value="FAD-bd_PCMH_sub1"/>
</dbReference>
<dbReference type="InterPro" id="IPR016169">
    <property type="entry name" value="FAD-bd_PCMH_sub2"/>
</dbReference>
<dbReference type="InterPro" id="IPR003170">
    <property type="entry name" value="MurB"/>
</dbReference>
<dbReference type="InterPro" id="IPR011601">
    <property type="entry name" value="MurB_C"/>
</dbReference>
<dbReference type="InterPro" id="IPR036635">
    <property type="entry name" value="MurB_C_sf"/>
</dbReference>
<dbReference type="InterPro" id="IPR006094">
    <property type="entry name" value="Oxid_FAD_bind_N"/>
</dbReference>
<dbReference type="NCBIfam" id="TIGR00179">
    <property type="entry name" value="murB"/>
    <property type="match status" value="1"/>
</dbReference>
<dbReference type="NCBIfam" id="NF000755">
    <property type="entry name" value="PRK00046.1"/>
    <property type="match status" value="1"/>
</dbReference>
<dbReference type="PANTHER" id="PTHR21071">
    <property type="entry name" value="UDP-N-ACETYLENOLPYRUVOYLGLUCOSAMINE REDUCTASE"/>
    <property type="match status" value="1"/>
</dbReference>
<dbReference type="PANTHER" id="PTHR21071:SF4">
    <property type="entry name" value="UDP-N-ACETYLENOLPYRUVOYLGLUCOSAMINE REDUCTASE"/>
    <property type="match status" value="1"/>
</dbReference>
<dbReference type="Pfam" id="PF01565">
    <property type="entry name" value="FAD_binding_4"/>
    <property type="match status" value="1"/>
</dbReference>
<dbReference type="Pfam" id="PF02873">
    <property type="entry name" value="MurB_C"/>
    <property type="match status" value="1"/>
</dbReference>
<dbReference type="SUPFAM" id="SSF56176">
    <property type="entry name" value="FAD-binding/transporter-associated domain-like"/>
    <property type="match status" value="1"/>
</dbReference>
<dbReference type="SUPFAM" id="SSF56194">
    <property type="entry name" value="Uridine diphospho-N-Acetylenolpyruvylglucosamine reductase, MurB, C-terminal domain"/>
    <property type="match status" value="1"/>
</dbReference>
<dbReference type="PROSITE" id="PS51387">
    <property type="entry name" value="FAD_PCMH"/>
    <property type="match status" value="1"/>
</dbReference>
<organism>
    <name type="scientific">Bordetella pertussis (strain Tohama I / ATCC BAA-589 / NCTC 13251)</name>
    <dbReference type="NCBI Taxonomy" id="257313"/>
    <lineage>
        <taxon>Bacteria</taxon>
        <taxon>Pseudomonadati</taxon>
        <taxon>Pseudomonadota</taxon>
        <taxon>Betaproteobacteria</taxon>
        <taxon>Burkholderiales</taxon>
        <taxon>Alcaligenaceae</taxon>
        <taxon>Bordetella</taxon>
    </lineage>
</organism>
<keyword id="KW-0131">Cell cycle</keyword>
<keyword id="KW-0132">Cell division</keyword>
<keyword id="KW-0133">Cell shape</keyword>
<keyword id="KW-0961">Cell wall biogenesis/degradation</keyword>
<keyword id="KW-0963">Cytoplasm</keyword>
<keyword id="KW-0274">FAD</keyword>
<keyword id="KW-0285">Flavoprotein</keyword>
<keyword id="KW-0521">NADP</keyword>
<keyword id="KW-0560">Oxidoreductase</keyword>
<keyword id="KW-0573">Peptidoglycan synthesis</keyword>
<keyword id="KW-1185">Reference proteome</keyword>
<name>MURB_BORPE</name>
<gene>
    <name type="primary">murB</name>
    <name type="ordered locus">BP2510</name>
</gene>
<feature type="chain" id="PRO_0000179183" description="UDP-N-acetylenolpyruvoylglucosamine reductase">
    <location>
        <begin position="1"/>
        <end position="351"/>
    </location>
</feature>
<feature type="domain" description="FAD-binding PCMH-type">
    <location>
        <begin position="29"/>
        <end position="199"/>
    </location>
</feature>
<feature type="active site" evidence="1">
    <location>
        <position position="175"/>
    </location>
</feature>
<feature type="active site" description="Proton donor" evidence="1">
    <location>
        <position position="248"/>
    </location>
</feature>
<feature type="active site" evidence="1">
    <location>
        <position position="344"/>
    </location>
</feature>
<accession>Q9X6Y8</accession>
<comment type="function">
    <text evidence="1">Cell wall formation.</text>
</comment>
<comment type="catalytic activity">
    <reaction>
        <text>UDP-N-acetyl-alpha-D-muramate + NADP(+) = UDP-N-acetyl-3-O-(1-carboxyvinyl)-alpha-D-glucosamine + NADPH + H(+)</text>
        <dbReference type="Rhea" id="RHEA:12248"/>
        <dbReference type="ChEBI" id="CHEBI:15378"/>
        <dbReference type="ChEBI" id="CHEBI:57783"/>
        <dbReference type="ChEBI" id="CHEBI:58349"/>
        <dbReference type="ChEBI" id="CHEBI:68483"/>
        <dbReference type="ChEBI" id="CHEBI:70757"/>
        <dbReference type="EC" id="1.3.1.98"/>
    </reaction>
</comment>
<comment type="cofactor">
    <cofactor evidence="1">
        <name>FAD</name>
        <dbReference type="ChEBI" id="CHEBI:57692"/>
    </cofactor>
</comment>
<comment type="pathway">
    <text>Cell wall biogenesis; peptidoglycan biosynthesis.</text>
</comment>
<comment type="subcellular location">
    <subcellularLocation>
        <location evidence="1">Cytoplasm</location>
    </subcellularLocation>
</comment>
<comment type="similarity">
    <text evidence="2">Belongs to the MurB family.</text>
</comment>
<reference key="1">
    <citation type="submission" date="1999-04" db="EMBL/GenBank/DDBJ databases">
        <authorList>
            <person name="Pradel E."/>
        </authorList>
    </citation>
    <scope>NUCLEOTIDE SEQUENCE [GENOMIC DNA]</scope>
    <source>
        <strain>Tohama I / ATCC BAA-589 / NCTC 13251</strain>
    </source>
</reference>
<reference key="2">
    <citation type="journal article" date="2003" name="Nat. Genet.">
        <title>Comparative analysis of the genome sequences of Bordetella pertussis, Bordetella parapertussis and Bordetella bronchiseptica.</title>
        <authorList>
            <person name="Parkhill J."/>
            <person name="Sebaihia M."/>
            <person name="Preston A."/>
            <person name="Murphy L.D."/>
            <person name="Thomson N.R."/>
            <person name="Harris D.E."/>
            <person name="Holden M.T.G."/>
            <person name="Churcher C.M."/>
            <person name="Bentley S.D."/>
            <person name="Mungall K.L."/>
            <person name="Cerdeno-Tarraga A.-M."/>
            <person name="Temple L."/>
            <person name="James K.D."/>
            <person name="Harris B."/>
            <person name="Quail M.A."/>
            <person name="Achtman M."/>
            <person name="Atkin R."/>
            <person name="Baker S."/>
            <person name="Basham D."/>
            <person name="Bason N."/>
            <person name="Cherevach I."/>
            <person name="Chillingworth T."/>
            <person name="Collins M."/>
            <person name="Cronin A."/>
            <person name="Davis P."/>
            <person name="Doggett J."/>
            <person name="Feltwell T."/>
            <person name="Goble A."/>
            <person name="Hamlin N."/>
            <person name="Hauser H."/>
            <person name="Holroyd S."/>
            <person name="Jagels K."/>
            <person name="Leather S."/>
            <person name="Moule S."/>
            <person name="Norberczak H."/>
            <person name="O'Neil S."/>
            <person name="Ormond D."/>
            <person name="Price C."/>
            <person name="Rabbinowitsch E."/>
            <person name="Rutter S."/>
            <person name="Sanders M."/>
            <person name="Saunders D."/>
            <person name="Seeger K."/>
            <person name="Sharp S."/>
            <person name="Simmonds M."/>
            <person name="Skelton J."/>
            <person name="Squares R."/>
            <person name="Squares S."/>
            <person name="Stevens K."/>
            <person name="Unwin L."/>
            <person name="Whitehead S."/>
            <person name="Barrell B.G."/>
            <person name="Maskell D.J."/>
        </authorList>
    </citation>
    <scope>NUCLEOTIDE SEQUENCE [LARGE SCALE GENOMIC DNA]</scope>
    <source>
        <strain>Tohama I / ATCC BAA-589 / NCTC 13251</strain>
    </source>
</reference>